<accession>P21095</accession>
<dbReference type="EC" id="2.7.11.1"/>
<dbReference type="EMBL" id="M35027">
    <property type="protein sequence ID" value="AAA48026.1"/>
    <property type="molecule type" value="Genomic_DNA"/>
</dbReference>
<dbReference type="PIR" id="F42507">
    <property type="entry name" value="F42507"/>
</dbReference>
<dbReference type="Proteomes" id="UP000008269">
    <property type="component" value="Segment"/>
</dbReference>
<dbReference type="GO" id="GO:0044165">
    <property type="term" value="C:host cell endoplasmic reticulum"/>
    <property type="evidence" value="ECO:0007669"/>
    <property type="project" value="UniProtKB-SubCell"/>
</dbReference>
<dbReference type="GO" id="GO:0044172">
    <property type="term" value="C:host cell endoplasmic reticulum-Golgi intermediate compartment"/>
    <property type="evidence" value="ECO:0007669"/>
    <property type="project" value="UniProtKB-SubCell"/>
</dbReference>
<dbReference type="GO" id="GO:0005524">
    <property type="term" value="F:ATP binding"/>
    <property type="evidence" value="ECO:0007669"/>
    <property type="project" value="UniProtKB-KW"/>
</dbReference>
<dbReference type="GO" id="GO:0106310">
    <property type="term" value="F:protein serine kinase activity"/>
    <property type="evidence" value="ECO:0007669"/>
    <property type="project" value="RHEA"/>
</dbReference>
<dbReference type="GO" id="GO:0004674">
    <property type="term" value="F:protein serine/threonine kinase activity"/>
    <property type="evidence" value="ECO:0007669"/>
    <property type="project" value="UniProtKB-KW"/>
</dbReference>
<dbReference type="InterPro" id="IPR008790">
    <property type="entry name" value="Poxvirus_ser/thr_kinase"/>
</dbReference>
<dbReference type="InterPro" id="IPR000719">
    <property type="entry name" value="Prot_kinase_dom"/>
</dbReference>
<dbReference type="InterPro" id="IPR008271">
    <property type="entry name" value="Ser/Thr_kinase_AS"/>
</dbReference>
<dbReference type="Pfam" id="PF05445">
    <property type="entry name" value="Pox_ser-thr_kin"/>
    <property type="match status" value="1"/>
</dbReference>
<dbReference type="PIRSF" id="PIRSF015695">
    <property type="entry name" value="STPK_F10L"/>
    <property type="match status" value="1"/>
</dbReference>
<dbReference type="PROSITE" id="PS50011">
    <property type="entry name" value="PROTEIN_KINASE_DOM"/>
    <property type="match status" value="1"/>
</dbReference>
<dbReference type="PROSITE" id="PS00108">
    <property type="entry name" value="PROTEIN_KINASE_ST"/>
    <property type="match status" value="1"/>
</dbReference>
<proteinExistence type="inferred from homology"/>
<protein>
    <recommendedName>
        <fullName>Serine/threonine-protein kinase 2</fullName>
        <ecNumber>2.7.11.1</ecNumber>
    </recommendedName>
    <alternativeName>
        <fullName>Vaccinia protein kinase 2</fullName>
    </alternativeName>
</protein>
<comment type="function">
    <text evidence="1">Essential serine-protein kinase involved in the early stage of virion morphogenesis.</text>
</comment>
<comment type="catalytic activity">
    <reaction>
        <text>L-seryl-[protein] + ATP = O-phospho-L-seryl-[protein] + ADP + H(+)</text>
        <dbReference type="Rhea" id="RHEA:17989"/>
        <dbReference type="Rhea" id="RHEA-COMP:9863"/>
        <dbReference type="Rhea" id="RHEA-COMP:11604"/>
        <dbReference type="ChEBI" id="CHEBI:15378"/>
        <dbReference type="ChEBI" id="CHEBI:29999"/>
        <dbReference type="ChEBI" id="CHEBI:30616"/>
        <dbReference type="ChEBI" id="CHEBI:83421"/>
        <dbReference type="ChEBI" id="CHEBI:456216"/>
        <dbReference type="EC" id="2.7.11.1"/>
    </reaction>
</comment>
<comment type="catalytic activity">
    <reaction>
        <text>L-threonyl-[protein] + ATP = O-phospho-L-threonyl-[protein] + ADP + H(+)</text>
        <dbReference type="Rhea" id="RHEA:46608"/>
        <dbReference type="Rhea" id="RHEA-COMP:11060"/>
        <dbReference type="Rhea" id="RHEA-COMP:11605"/>
        <dbReference type="ChEBI" id="CHEBI:15378"/>
        <dbReference type="ChEBI" id="CHEBI:30013"/>
        <dbReference type="ChEBI" id="CHEBI:30616"/>
        <dbReference type="ChEBI" id="CHEBI:61977"/>
        <dbReference type="ChEBI" id="CHEBI:456216"/>
        <dbReference type="EC" id="2.7.11.1"/>
    </reaction>
</comment>
<comment type="subcellular location">
    <subcellularLocation>
        <location evidence="1">Host endoplasmic reticulum</location>
    </subcellularLocation>
    <subcellularLocation>
        <location evidence="1">Host endoplasmic reticulum-Golgi intermediate compartment</location>
    </subcellularLocation>
</comment>
<comment type="PTM">
    <text evidence="1">Phosphorylated in vivo. Autophosphorylated in vitro.</text>
</comment>
<comment type="similarity">
    <text evidence="2">Belongs to the protein kinase superfamily. Ser/Thr protein kinase family. Poxviruses subfamily.</text>
</comment>
<sequence length="439" mass="52158">MGVANDSSPEYQWMSPHRLSDTVILGDCLYFNNIMSQLDLHQNWAPSVRLLNYFKNFNRETLLKIEENDYINSSFFQQKDKRFYPINDDFYHISTGGYGIVFKIDNYVVKFVFEATKLYSPMETTAEFTVPKFLYNNLKGDEKKLIVCAWAMGLNYKLTFLHTLYKRVLHMLLLLIQTMDGQELSLRYSSKVFLKAFNERKDSIKFVKLLSHFYPAVINSNINVINYFNRMFHFFEHEKRTNYEYERGNIIIFPLALYSADKVDTELAIKLGFKSLVQYIKFIFLQMALLYIKIYELPCCDNFLHADLKPDNILLFDSNEPIIIHLKDKKFVFNERIKSALNDFDFSQVAGIINKKIKNNFKVKHNWYYDFHFFVHTLLKTYPEIEKDIEFSTALEEFIMCTKTDCDKYRLKVSILHPISFLEKFIMRDIFSDWINGGN</sequence>
<evidence type="ECO:0000250" key="1">
    <source>
        <dbReference type="UniProtKB" id="Q89121"/>
    </source>
</evidence>
<evidence type="ECO:0000255" key="2">
    <source>
        <dbReference type="PROSITE-ProRule" id="PRU00159"/>
    </source>
</evidence>
<evidence type="ECO:0000255" key="3">
    <source>
        <dbReference type="PROSITE-ProRule" id="PRU10027"/>
    </source>
</evidence>
<name>VPK2_VACCC</name>
<feature type="chain" id="PRO_0000086796" description="Serine/threonine-protein kinase 2">
    <location>
        <begin position="1"/>
        <end position="439"/>
    </location>
</feature>
<feature type="domain" description="Protein kinase" evidence="2">
    <location>
        <begin position="87"/>
        <end position="439"/>
    </location>
</feature>
<feature type="active site" description="Proton acceptor" evidence="2 3">
    <location>
        <position position="307"/>
    </location>
</feature>
<feature type="binding site" evidence="2">
    <location>
        <begin position="93"/>
        <end position="101"/>
    </location>
    <ligand>
        <name>ATP</name>
        <dbReference type="ChEBI" id="CHEBI:30616"/>
    </ligand>
</feature>
<feature type="binding site" evidence="2">
    <location>
        <position position="117"/>
    </location>
    <ligand>
        <name>ATP</name>
        <dbReference type="ChEBI" id="CHEBI:30616"/>
    </ligand>
</feature>
<gene>
    <name type="primary">OPG054</name>
    <name type="synonym">VPK2</name>
    <name type="ORF">F10L</name>
</gene>
<organism>
    <name type="scientific">Vaccinia virus (strain Copenhagen)</name>
    <name type="common">VACV</name>
    <dbReference type="NCBI Taxonomy" id="10249"/>
    <lineage>
        <taxon>Viruses</taxon>
        <taxon>Varidnaviria</taxon>
        <taxon>Bamfordvirae</taxon>
        <taxon>Nucleocytoviricota</taxon>
        <taxon>Pokkesviricetes</taxon>
        <taxon>Chitovirales</taxon>
        <taxon>Poxviridae</taxon>
        <taxon>Chordopoxvirinae</taxon>
        <taxon>Orthopoxvirus</taxon>
        <taxon>Vaccinia virus</taxon>
    </lineage>
</organism>
<reference key="1">
    <citation type="journal article" date="1990" name="Virology">
        <title>The complete DNA sequence of vaccinia virus.</title>
        <authorList>
            <person name="Goebel S.J."/>
            <person name="Johnson G.P."/>
            <person name="Perkus M.E."/>
            <person name="Davis S.W."/>
            <person name="Winslow J.P."/>
            <person name="Paoletti E."/>
        </authorList>
    </citation>
    <scope>NUCLEOTIDE SEQUENCE [LARGE SCALE GENOMIC DNA]</scope>
</reference>
<reference key="2">
    <citation type="journal article" date="1990" name="Virology">
        <title>Appendix to 'The complete DNA sequence of vaccinia virus'.</title>
        <authorList>
            <person name="Goebel S.J."/>
            <person name="Johnson G.P."/>
            <person name="Perkus M.E."/>
            <person name="Davis S.W."/>
            <person name="Winslow J.P."/>
            <person name="Paoletti E."/>
        </authorList>
    </citation>
    <scope>COMPLETE GENOME</scope>
</reference>
<organismHost>
    <name type="scientific">Homo sapiens</name>
    <name type="common">Human</name>
    <dbReference type="NCBI Taxonomy" id="9606"/>
</organismHost>
<keyword id="KW-0067">ATP-binding</keyword>
<keyword id="KW-1038">Host endoplasmic reticulum</keyword>
<keyword id="KW-0418">Kinase</keyword>
<keyword id="KW-0426">Late protein</keyword>
<keyword id="KW-0547">Nucleotide-binding</keyword>
<keyword id="KW-0597">Phosphoprotein</keyword>
<keyword id="KW-1185">Reference proteome</keyword>
<keyword id="KW-0723">Serine/threonine-protein kinase</keyword>
<keyword id="KW-0808">Transferase</keyword>